<evidence type="ECO:0000255" key="1">
    <source>
        <dbReference type="HAMAP-Rule" id="MF_00518"/>
    </source>
</evidence>
<gene>
    <name evidence="1" type="primary">dtd</name>
    <name type="ordered locus">AM1_4568</name>
</gene>
<protein>
    <recommendedName>
        <fullName evidence="1">D-aminoacyl-tRNA deacylase</fullName>
        <shortName evidence="1">DTD</shortName>
        <ecNumber evidence="1">3.1.1.96</ecNumber>
    </recommendedName>
    <alternativeName>
        <fullName evidence="1">Gly-tRNA(Ala) deacylase</fullName>
    </alternativeName>
</protein>
<name>DTD_ACAM1</name>
<dbReference type="EC" id="3.1.1.96" evidence="1"/>
<dbReference type="EMBL" id="CP000828">
    <property type="protein sequence ID" value="ABW29542.1"/>
    <property type="molecule type" value="Genomic_DNA"/>
</dbReference>
<dbReference type="RefSeq" id="WP_012164851.1">
    <property type="nucleotide sequence ID" value="NC_009925.1"/>
</dbReference>
<dbReference type="SMR" id="B0BZ98"/>
<dbReference type="STRING" id="329726.AM1_4568"/>
<dbReference type="KEGG" id="amr:AM1_4568"/>
<dbReference type="eggNOG" id="COG1490">
    <property type="taxonomic scope" value="Bacteria"/>
</dbReference>
<dbReference type="HOGENOM" id="CLU_076901_1_0_3"/>
<dbReference type="OrthoDB" id="9801395at2"/>
<dbReference type="Proteomes" id="UP000000268">
    <property type="component" value="Chromosome"/>
</dbReference>
<dbReference type="GO" id="GO:0005737">
    <property type="term" value="C:cytoplasm"/>
    <property type="evidence" value="ECO:0007669"/>
    <property type="project" value="UniProtKB-SubCell"/>
</dbReference>
<dbReference type="GO" id="GO:0051500">
    <property type="term" value="F:D-tyrosyl-tRNA(Tyr) deacylase activity"/>
    <property type="evidence" value="ECO:0007669"/>
    <property type="project" value="TreeGrafter"/>
</dbReference>
<dbReference type="GO" id="GO:0106026">
    <property type="term" value="F:Gly-tRNA(Ala) deacylase activity"/>
    <property type="evidence" value="ECO:0007669"/>
    <property type="project" value="UniProtKB-UniRule"/>
</dbReference>
<dbReference type="GO" id="GO:0043908">
    <property type="term" value="F:Ser(Gly)-tRNA(Ala) hydrolase activity"/>
    <property type="evidence" value="ECO:0007669"/>
    <property type="project" value="UniProtKB-UniRule"/>
</dbReference>
<dbReference type="GO" id="GO:0000049">
    <property type="term" value="F:tRNA binding"/>
    <property type="evidence" value="ECO:0007669"/>
    <property type="project" value="UniProtKB-UniRule"/>
</dbReference>
<dbReference type="GO" id="GO:0019478">
    <property type="term" value="P:D-amino acid catabolic process"/>
    <property type="evidence" value="ECO:0007669"/>
    <property type="project" value="UniProtKB-UniRule"/>
</dbReference>
<dbReference type="CDD" id="cd00563">
    <property type="entry name" value="Dtyr_deacylase"/>
    <property type="match status" value="1"/>
</dbReference>
<dbReference type="FunFam" id="3.50.80.10:FF:000001">
    <property type="entry name" value="D-aminoacyl-tRNA deacylase"/>
    <property type="match status" value="1"/>
</dbReference>
<dbReference type="Gene3D" id="3.50.80.10">
    <property type="entry name" value="D-tyrosyl-tRNA(Tyr) deacylase"/>
    <property type="match status" value="1"/>
</dbReference>
<dbReference type="HAMAP" id="MF_00518">
    <property type="entry name" value="Deacylase_Dtd"/>
    <property type="match status" value="1"/>
</dbReference>
<dbReference type="InterPro" id="IPR003732">
    <property type="entry name" value="Daa-tRNA_deacyls_DTD"/>
</dbReference>
<dbReference type="InterPro" id="IPR023509">
    <property type="entry name" value="DTD-like_sf"/>
</dbReference>
<dbReference type="NCBIfam" id="TIGR00256">
    <property type="entry name" value="D-aminoacyl-tRNA deacylase"/>
    <property type="match status" value="1"/>
</dbReference>
<dbReference type="PANTHER" id="PTHR10472:SF5">
    <property type="entry name" value="D-AMINOACYL-TRNA DEACYLASE 1"/>
    <property type="match status" value="1"/>
</dbReference>
<dbReference type="PANTHER" id="PTHR10472">
    <property type="entry name" value="D-TYROSYL-TRNA TYR DEACYLASE"/>
    <property type="match status" value="1"/>
</dbReference>
<dbReference type="Pfam" id="PF02580">
    <property type="entry name" value="Tyr_Deacylase"/>
    <property type="match status" value="1"/>
</dbReference>
<dbReference type="SUPFAM" id="SSF69500">
    <property type="entry name" value="DTD-like"/>
    <property type="match status" value="1"/>
</dbReference>
<comment type="function">
    <text evidence="1">An aminoacyl-tRNA editing enzyme that deacylates mischarged D-aminoacyl-tRNAs. Also deacylates mischarged glycyl-tRNA(Ala), protecting cells against glycine mischarging by AlaRS. Acts via tRNA-based rather than protein-based catalysis; rejects L-amino acids rather than detecting D-amino acids in the active site. By recycling D-aminoacyl-tRNA to D-amino acids and free tRNA molecules, this enzyme counteracts the toxicity associated with the formation of D-aminoacyl-tRNA entities in vivo and helps enforce protein L-homochirality.</text>
</comment>
<comment type="catalytic activity">
    <reaction evidence="1">
        <text>glycyl-tRNA(Ala) + H2O = tRNA(Ala) + glycine + H(+)</text>
        <dbReference type="Rhea" id="RHEA:53744"/>
        <dbReference type="Rhea" id="RHEA-COMP:9657"/>
        <dbReference type="Rhea" id="RHEA-COMP:13640"/>
        <dbReference type="ChEBI" id="CHEBI:15377"/>
        <dbReference type="ChEBI" id="CHEBI:15378"/>
        <dbReference type="ChEBI" id="CHEBI:57305"/>
        <dbReference type="ChEBI" id="CHEBI:78442"/>
        <dbReference type="ChEBI" id="CHEBI:78522"/>
        <dbReference type="EC" id="3.1.1.96"/>
    </reaction>
</comment>
<comment type="catalytic activity">
    <reaction evidence="1">
        <text>a D-aminoacyl-tRNA + H2O = a tRNA + a D-alpha-amino acid + H(+)</text>
        <dbReference type="Rhea" id="RHEA:13953"/>
        <dbReference type="Rhea" id="RHEA-COMP:10123"/>
        <dbReference type="Rhea" id="RHEA-COMP:10124"/>
        <dbReference type="ChEBI" id="CHEBI:15377"/>
        <dbReference type="ChEBI" id="CHEBI:15378"/>
        <dbReference type="ChEBI" id="CHEBI:59871"/>
        <dbReference type="ChEBI" id="CHEBI:78442"/>
        <dbReference type="ChEBI" id="CHEBI:79333"/>
        <dbReference type="EC" id="3.1.1.96"/>
    </reaction>
</comment>
<comment type="subunit">
    <text evidence="1">Homodimer.</text>
</comment>
<comment type="subcellular location">
    <subcellularLocation>
        <location evidence="1">Cytoplasm</location>
    </subcellularLocation>
</comment>
<comment type="domain">
    <text evidence="1">A Gly-cisPro motif from one monomer fits into the active site of the other monomer to allow specific chiral rejection of L-amino acids.</text>
</comment>
<comment type="similarity">
    <text evidence="1">Belongs to the DTD family.</text>
</comment>
<keyword id="KW-0963">Cytoplasm</keyword>
<keyword id="KW-0378">Hydrolase</keyword>
<keyword id="KW-1185">Reference proteome</keyword>
<keyword id="KW-0694">RNA-binding</keyword>
<keyword id="KW-0820">tRNA-binding</keyword>
<feature type="chain" id="PRO_1000081643" description="D-aminoacyl-tRNA deacylase">
    <location>
        <begin position="1"/>
        <end position="151"/>
    </location>
</feature>
<feature type="short sequence motif" description="Gly-cisPro motif, important for rejection of L-amino acids" evidence="1">
    <location>
        <begin position="137"/>
        <end position="138"/>
    </location>
</feature>
<organism>
    <name type="scientific">Acaryochloris marina (strain MBIC 11017)</name>
    <dbReference type="NCBI Taxonomy" id="329726"/>
    <lineage>
        <taxon>Bacteria</taxon>
        <taxon>Bacillati</taxon>
        <taxon>Cyanobacteriota</taxon>
        <taxon>Cyanophyceae</taxon>
        <taxon>Acaryochloridales</taxon>
        <taxon>Acaryochloridaceae</taxon>
        <taxon>Acaryochloris</taxon>
    </lineage>
</organism>
<sequence length="151" mass="16832">MRIILQRVNESRVEVAGQIIGRIEKGLNLLVGITPSDTDQEVAWMARKCLELRIFPDQSGKLSQSVQDIEGGLLVISQFTLYGDCRKGRRPSFDKAAPGAMAEQIYEQFVTKLRASGLQVETGQFGAMMNVYIENDGPVTLILEREAESER</sequence>
<reference key="1">
    <citation type="journal article" date="2008" name="Proc. Natl. Acad. Sci. U.S.A.">
        <title>Niche adaptation and genome expansion in the chlorophyll d-producing cyanobacterium Acaryochloris marina.</title>
        <authorList>
            <person name="Swingley W.D."/>
            <person name="Chen M."/>
            <person name="Cheung P.C."/>
            <person name="Conrad A.L."/>
            <person name="Dejesa L.C."/>
            <person name="Hao J."/>
            <person name="Honchak B.M."/>
            <person name="Karbach L.E."/>
            <person name="Kurdoglu A."/>
            <person name="Lahiri S."/>
            <person name="Mastrian S.D."/>
            <person name="Miyashita H."/>
            <person name="Page L."/>
            <person name="Ramakrishna P."/>
            <person name="Satoh S."/>
            <person name="Sattley W.M."/>
            <person name="Shimada Y."/>
            <person name="Taylor H.L."/>
            <person name="Tomo T."/>
            <person name="Tsuchiya T."/>
            <person name="Wang Z.T."/>
            <person name="Raymond J."/>
            <person name="Mimuro M."/>
            <person name="Blankenship R.E."/>
            <person name="Touchman J.W."/>
        </authorList>
    </citation>
    <scope>NUCLEOTIDE SEQUENCE [LARGE SCALE GENOMIC DNA]</scope>
    <source>
        <strain>MBIC 11017</strain>
    </source>
</reference>
<accession>B0BZ98</accession>
<proteinExistence type="inferred from homology"/>